<organism>
    <name type="scientific">Danio rerio</name>
    <name type="common">Zebrafish</name>
    <name type="synonym">Brachydanio rerio</name>
    <dbReference type="NCBI Taxonomy" id="7955"/>
    <lineage>
        <taxon>Eukaryota</taxon>
        <taxon>Metazoa</taxon>
        <taxon>Chordata</taxon>
        <taxon>Craniata</taxon>
        <taxon>Vertebrata</taxon>
        <taxon>Euteleostomi</taxon>
        <taxon>Actinopterygii</taxon>
        <taxon>Neopterygii</taxon>
        <taxon>Teleostei</taxon>
        <taxon>Ostariophysi</taxon>
        <taxon>Cypriniformes</taxon>
        <taxon>Danionidae</taxon>
        <taxon>Danioninae</taxon>
        <taxon>Danio</taxon>
    </lineage>
</organism>
<keyword id="KW-0067">ATP-binding</keyword>
<keyword id="KW-0072">Autophagy</keyword>
<keyword id="KW-0131">Cell cycle</keyword>
<keyword id="KW-0963">Cytoplasm</keyword>
<keyword id="KW-0227">DNA damage</keyword>
<keyword id="KW-0234">DNA repair</keyword>
<keyword id="KW-0256">Endoplasmic reticulum</keyword>
<keyword id="KW-0378">Hydrolase</keyword>
<keyword id="KW-0446">Lipid-binding</keyword>
<keyword id="KW-0547">Nucleotide-binding</keyword>
<keyword id="KW-0539">Nucleus</keyword>
<keyword id="KW-0597">Phosphoprotein</keyword>
<keyword id="KW-1185">Reference proteome</keyword>
<keyword id="KW-0813">Transport</keyword>
<comment type="function">
    <text evidence="1 2 3 7">Necessary for the fragmentation of Golgi stacks during mitosis and for their reassembly after mitosis. Involved in the formation of the nuclear envelope, and of the transitional endoplasmic reticulum (tER). The transfer of membranes from the endoplasmic reticulum to the Golgi apparatus occurs via 50-70 nm transition vesicles which derive from part-rough, part-smooth transitional elements of the endoplasmic reticulum (tER). Vesicle budding from the tER is an ATP-dependent process. Also involved in DNA damage response: recruited to double-strand breaks (DSBs) sites and promotes the recruitment of tp53bp1 at DNA damage sites (By similarity). Together with sprtn metalloprotease, involved in the repair of covalent DNA-protein cross-links (DPCs) during DNA synthesis (By similarity). Involved in interstrand cross-link repair in response to replication stress by mediating unloading of the ubiquitinated CMG helicase complex (By similarity). Enhances cell cycle progression and inhibits apoptosis at low temperatures (PubMed:12914916). Essential for the maturation of ubiquitin-containing autophagosomes and the clearance of ubiquitinated protein by autophagy (By similarity). Acts as a negative regulator of type I interferon production by promoting ubiquitination of RIGI (By similarity). May play a role in the ubiquitin-dependent sorting of membrane proteins to lysosomes where they undergo degradation (By similarity). May more particularly play a role in caveolins sorting in cells (By similarity). By controlling the steady-state expression of the IGF1R receptor, indirectly regulates the insulin-like growth factor receptor signaling pathway (By similarity).</text>
</comment>
<comment type="catalytic activity">
    <reaction evidence="1">
        <text>ATP + H2O = ADP + phosphate + H(+)</text>
        <dbReference type="Rhea" id="RHEA:13065"/>
        <dbReference type="ChEBI" id="CHEBI:15377"/>
        <dbReference type="ChEBI" id="CHEBI:15378"/>
        <dbReference type="ChEBI" id="CHEBI:30616"/>
        <dbReference type="ChEBI" id="CHEBI:43474"/>
        <dbReference type="ChEBI" id="CHEBI:456216"/>
        <dbReference type="EC" id="3.6.4.6"/>
    </reaction>
</comment>
<comment type="subunit">
    <text evidence="1">Homohexamer.</text>
</comment>
<comment type="subcellular location">
    <subcellularLocation>
        <location evidence="1">Cytoplasm</location>
        <location evidence="1">Cytosol</location>
    </subcellularLocation>
    <subcellularLocation>
        <location evidence="3">Endoplasmic reticulum</location>
    </subcellularLocation>
    <subcellularLocation>
        <location evidence="1">Nucleus</location>
    </subcellularLocation>
</comment>
<comment type="induction">
    <text evidence="7">By cold.</text>
</comment>
<comment type="similarity">
    <text evidence="5">Belongs to the AAA ATPase family.</text>
</comment>
<accession>Q7ZU99</accession>
<accession>Q76KA4</accession>
<sequence length="806" mass="89424">MASGGESKNDDLSTAILKQKNRPNRLIVDESINEDNSVVSLSQAKMDELQLFRGDTVLLKGKKRRETVCIVLSDDTCSDEKVRMNRVVRNNLRVRLGDVISIQPCPDVKYGKRIHVLPIDDTVEGITGNLFEVYLKPYFLEAYRPIRKGDIFLVRGGMRAVEFKVVETDPSPYCIVAPDTVIHCEGEPIKREDEEESLNEVGYDDIGGVRKQLAQIKEMVELPLRHPALFKAIGVKPPRGILLYGPPGTGKTLIARAVANETGAFFFLINGPEIMSKLAGESESNLRKAFEEAEKNAPAIIFIDELDAIAPKREKTHGEVERRIVSQLLTLMDGLKQRAHVIVMAATNRPNSIDPALRRFGRFDREVDIGIPDATGRLEILQIHTKNMKLADDVDLEQVANETHGHVGADLAALCSEAALQAIRKKMDLIDLEDETIDAEVMNSLAVTMDDFRWALSQSNPSALRETVVEVPNITWEDIGGLDDVKRELQELVQYPVEHPDKFLKFGMTPSKGVLFYGPPGCGKTLLAKAIANECQANFISIKGPELLTMWFGESEANVREIFDKARQAAPCVLFFDELDSIAKARGGNVGDGGGAADRVINQILTEMDGMSSKKNVFIIGATNRPDIIDPAILRPGRLDQLIYIPLPDEKSRIAILKANLRKSPISKDVDLDFLAKMTNGFSGADLTEICQRACKLAIRESIENEIRRERERQTNPSAMEVEEDDPVPEIRKDHFEEAMRFARRSVSDNDIRKYEMFAQTLQQSRGFGSFRFPSSNQGGSGPSQGSSGGGGGNVFNEDNDDDLYG</sequence>
<dbReference type="EC" id="3.6.4.6" evidence="1"/>
<dbReference type="EMBL" id="AB093594">
    <property type="protein sequence ID" value="BAC87740.1"/>
    <property type="molecule type" value="mRNA"/>
</dbReference>
<dbReference type="EMBL" id="AY576993">
    <property type="protein sequence ID" value="AAS92631.1"/>
    <property type="molecule type" value="mRNA"/>
</dbReference>
<dbReference type="EMBL" id="CR318632">
    <property type="protein sequence ID" value="CAM13143.1"/>
    <property type="molecule type" value="Genomic_DNA"/>
</dbReference>
<dbReference type="EMBL" id="BC050488">
    <property type="protein sequence ID" value="AAH50488.1"/>
    <property type="molecule type" value="mRNA"/>
</dbReference>
<dbReference type="EMBL" id="BC067384">
    <property type="protein sequence ID" value="AAH67384.1"/>
    <property type="molecule type" value="mRNA"/>
</dbReference>
<dbReference type="RefSeq" id="NP_958889.1">
    <property type="nucleotide sequence ID" value="NM_201481.1"/>
</dbReference>
<dbReference type="SMR" id="Q7ZU99"/>
<dbReference type="FunCoup" id="Q7ZU99">
    <property type="interactions" value="2911"/>
</dbReference>
<dbReference type="IntAct" id="Q7ZU99">
    <property type="interactions" value="1"/>
</dbReference>
<dbReference type="MINT" id="Q7ZU99"/>
<dbReference type="STRING" id="7955.ENSDARP00000012048"/>
<dbReference type="iPTMnet" id="Q7ZU99"/>
<dbReference type="PaxDb" id="7955-ENSDARP00000012048"/>
<dbReference type="Ensembl" id="ENSDART00000023779">
    <property type="protein sequence ID" value="ENSDARP00000012048"/>
    <property type="gene ID" value="ENSDARG00000020008"/>
</dbReference>
<dbReference type="GeneID" id="327197"/>
<dbReference type="KEGG" id="dre:327197"/>
<dbReference type="AGR" id="ZFIN:ZDB-GENE-030131-5408"/>
<dbReference type="CTD" id="7415"/>
<dbReference type="ZFIN" id="ZDB-GENE-030131-5408">
    <property type="gene designation" value="vcp"/>
</dbReference>
<dbReference type="eggNOG" id="KOG0730">
    <property type="taxonomic scope" value="Eukaryota"/>
</dbReference>
<dbReference type="HOGENOM" id="CLU_000688_12_0_1"/>
<dbReference type="InParanoid" id="Q7ZU99"/>
<dbReference type="OMA" id="VWPAYPE"/>
<dbReference type="OrthoDB" id="27435at2759"/>
<dbReference type="PhylomeDB" id="Q7ZU99"/>
<dbReference type="TreeFam" id="TF300542"/>
<dbReference type="Reactome" id="R-DRE-110320">
    <property type="pathway name" value="Translesion Synthesis by POLH"/>
</dbReference>
<dbReference type="Reactome" id="R-DRE-382556">
    <property type="pathway name" value="ABC-family proteins mediated transport"/>
</dbReference>
<dbReference type="Reactome" id="R-DRE-532668">
    <property type="pathway name" value="N-glycan trimming in the ER and Calnexin/Calreticulin cycle"/>
</dbReference>
<dbReference type="Reactome" id="R-DRE-5358346">
    <property type="pathway name" value="Hedgehog ligand biogenesis"/>
</dbReference>
<dbReference type="Reactome" id="R-DRE-5689896">
    <property type="pathway name" value="Ovarian tumor domain proteases"/>
</dbReference>
<dbReference type="Reactome" id="R-DRE-6798695">
    <property type="pathway name" value="Neutrophil degranulation"/>
</dbReference>
<dbReference type="Reactome" id="R-DRE-8951664">
    <property type="pathway name" value="Neddylation"/>
</dbReference>
<dbReference type="Reactome" id="R-DRE-9755511">
    <property type="pathway name" value="KEAP1-NFE2L2 pathway"/>
</dbReference>
<dbReference type="PRO" id="PR:Q7ZU99"/>
<dbReference type="Proteomes" id="UP000000437">
    <property type="component" value="Alternate scaffold 5"/>
</dbReference>
<dbReference type="Proteomes" id="UP000000437">
    <property type="component" value="Chromosome 5"/>
</dbReference>
<dbReference type="Bgee" id="ENSDARG00000020008">
    <property type="expression patterns" value="Expressed in testis and 24 other cell types or tissues"/>
</dbReference>
<dbReference type="GO" id="GO:0005737">
    <property type="term" value="C:cytoplasm"/>
    <property type="evidence" value="ECO:0000250"/>
    <property type="project" value="UniProtKB"/>
</dbReference>
<dbReference type="GO" id="GO:0005829">
    <property type="term" value="C:cytosol"/>
    <property type="evidence" value="ECO:0000318"/>
    <property type="project" value="GO_Central"/>
</dbReference>
<dbReference type="GO" id="GO:0005634">
    <property type="term" value="C:nucleus"/>
    <property type="evidence" value="ECO:0000318"/>
    <property type="project" value="GO_Central"/>
</dbReference>
<dbReference type="GO" id="GO:0035861">
    <property type="term" value="C:site of double-strand break"/>
    <property type="evidence" value="ECO:0000250"/>
    <property type="project" value="UniProtKB"/>
</dbReference>
<dbReference type="GO" id="GO:0034098">
    <property type="term" value="C:VCP-NPL4-UFD1 AAA ATPase complex"/>
    <property type="evidence" value="ECO:0000318"/>
    <property type="project" value="GO_Central"/>
</dbReference>
<dbReference type="GO" id="GO:0005524">
    <property type="term" value="F:ATP binding"/>
    <property type="evidence" value="ECO:0007669"/>
    <property type="project" value="UniProtKB-KW"/>
</dbReference>
<dbReference type="GO" id="GO:0016887">
    <property type="term" value="F:ATP hydrolysis activity"/>
    <property type="evidence" value="ECO:0000318"/>
    <property type="project" value="GO_Central"/>
</dbReference>
<dbReference type="GO" id="GO:0008289">
    <property type="term" value="F:lipid binding"/>
    <property type="evidence" value="ECO:0007669"/>
    <property type="project" value="UniProtKB-KW"/>
</dbReference>
<dbReference type="GO" id="GO:0031593">
    <property type="term" value="F:polyubiquitin modification-dependent protein binding"/>
    <property type="evidence" value="ECO:0000318"/>
    <property type="project" value="GO_Central"/>
</dbReference>
<dbReference type="GO" id="GO:0097352">
    <property type="term" value="P:autophagosome maturation"/>
    <property type="evidence" value="ECO:0000250"/>
    <property type="project" value="UniProtKB"/>
</dbReference>
<dbReference type="GO" id="GO:0006914">
    <property type="term" value="P:autophagy"/>
    <property type="evidence" value="ECO:0000250"/>
    <property type="project" value="UniProtKB"/>
</dbReference>
<dbReference type="GO" id="GO:0055013">
    <property type="term" value="P:cardiac muscle cell development"/>
    <property type="evidence" value="ECO:0000315"/>
    <property type="project" value="ZFIN"/>
</dbReference>
<dbReference type="GO" id="GO:0043009">
    <property type="term" value="P:chordate embryonic development"/>
    <property type="evidence" value="ECO:0000315"/>
    <property type="project" value="ZFIN"/>
</dbReference>
<dbReference type="GO" id="GO:0006974">
    <property type="term" value="P:DNA damage response"/>
    <property type="evidence" value="ECO:0000250"/>
    <property type="project" value="UniProtKB"/>
</dbReference>
<dbReference type="GO" id="GO:0006281">
    <property type="term" value="P:DNA repair"/>
    <property type="evidence" value="ECO:0000250"/>
    <property type="project" value="UniProtKB"/>
</dbReference>
<dbReference type="GO" id="GO:0006302">
    <property type="term" value="P:double-strand break repair"/>
    <property type="evidence" value="ECO:0000250"/>
    <property type="project" value="UniProtKB"/>
</dbReference>
<dbReference type="GO" id="GO:0032510">
    <property type="term" value="P:endosome to lysosome transport via multivesicular body sorting pathway"/>
    <property type="evidence" value="ECO:0000250"/>
    <property type="project" value="UniProtKB"/>
</dbReference>
<dbReference type="GO" id="GO:0036503">
    <property type="term" value="P:ERAD pathway"/>
    <property type="evidence" value="ECO:0000250"/>
    <property type="project" value="UniProtKB"/>
</dbReference>
<dbReference type="GO" id="GO:0060047">
    <property type="term" value="P:heart contraction"/>
    <property type="evidence" value="ECO:0000315"/>
    <property type="project" value="ZFIN"/>
</dbReference>
<dbReference type="GO" id="GO:0036297">
    <property type="term" value="P:interstrand cross-link repair"/>
    <property type="evidence" value="ECO:0000250"/>
    <property type="project" value="UniProtKB"/>
</dbReference>
<dbReference type="GO" id="GO:0007626">
    <property type="term" value="P:locomotory behavior"/>
    <property type="evidence" value="ECO:0000315"/>
    <property type="project" value="ZFIN"/>
</dbReference>
<dbReference type="GO" id="GO:0016236">
    <property type="term" value="P:macroautophagy"/>
    <property type="evidence" value="ECO:0000250"/>
    <property type="project" value="UniProtKB"/>
</dbReference>
<dbReference type="GO" id="GO:0051228">
    <property type="term" value="P:mitotic spindle disassembly"/>
    <property type="evidence" value="ECO:0000318"/>
    <property type="project" value="GO_Central"/>
</dbReference>
<dbReference type="GO" id="GO:0030239">
    <property type="term" value="P:myofibril assembly"/>
    <property type="evidence" value="ECO:0000315"/>
    <property type="project" value="ZFIN"/>
</dbReference>
<dbReference type="GO" id="GO:0043161">
    <property type="term" value="P:proteasome-mediated ubiquitin-dependent protein catabolic process"/>
    <property type="evidence" value="ECO:0000250"/>
    <property type="project" value="UniProtKB"/>
</dbReference>
<dbReference type="GO" id="GO:0016567">
    <property type="term" value="P:protein ubiquitination"/>
    <property type="evidence" value="ECO:0000250"/>
    <property type="project" value="UniProtKB"/>
</dbReference>
<dbReference type="GO" id="GO:0010506">
    <property type="term" value="P:regulation of autophagy"/>
    <property type="evidence" value="ECO:0000315"/>
    <property type="project" value="ZFIN"/>
</dbReference>
<dbReference type="GO" id="GO:0032434">
    <property type="term" value="P:regulation of proteasomal ubiquitin-dependent protein catabolic process"/>
    <property type="evidence" value="ECO:0000315"/>
    <property type="project" value="ZFIN"/>
</dbReference>
<dbReference type="GO" id="GO:1905634">
    <property type="term" value="P:regulation of protein localization to chromatin"/>
    <property type="evidence" value="ECO:0000250"/>
    <property type="project" value="UniProtKB"/>
</dbReference>
<dbReference type="GO" id="GO:2000058">
    <property type="term" value="P:regulation of ubiquitin-dependent protein catabolic process"/>
    <property type="evidence" value="ECO:0000315"/>
    <property type="project" value="ZFIN"/>
</dbReference>
<dbReference type="GO" id="GO:0034976">
    <property type="term" value="P:response to endoplasmic reticulum stress"/>
    <property type="evidence" value="ECO:0000315"/>
    <property type="project" value="ZFIN"/>
</dbReference>
<dbReference type="GO" id="GO:0030970">
    <property type="term" value="P:retrograde protein transport, ER to cytosol"/>
    <property type="evidence" value="ECO:0000318"/>
    <property type="project" value="GO_Central"/>
</dbReference>
<dbReference type="GO" id="GO:0019985">
    <property type="term" value="P:translesion synthesis"/>
    <property type="evidence" value="ECO:0000250"/>
    <property type="project" value="UniProtKB"/>
</dbReference>
<dbReference type="CDD" id="cd19519">
    <property type="entry name" value="RecA-like_CDC48_r1-like"/>
    <property type="match status" value="1"/>
</dbReference>
<dbReference type="CDD" id="cd19528">
    <property type="entry name" value="RecA-like_CDC48_r2-like"/>
    <property type="match status" value="1"/>
</dbReference>
<dbReference type="FunFam" id="1.10.8.60:FF:000004">
    <property type="entry name" value="Cell division control 48"/>
    <property type="match status" value="1"/>
</dbReference>
<dbReference type="FunFam" id="3.10.330.10:FF:000001">
    <property type="entry name" value="Cell division control 48"/>
    <property type="match status" value="1"/>
</dbReference>
<dbReference type="FunFam" id="2.40.40.20:FF:000003">
    <property type="entry name" value="Transitional endoplasmic reticulum ATPase"/>
    <property type="match status" value="1"/>
</dbReference>
<dbReference type="FunFam" id="3.40.50.300:FF:000012">
    <property type="entry name" value="Transitional endoplasmic reticulum ATPase"/>
    <property type="match status" value="1"/>
</dbReference>
<dbReference type="FunFam" id="3.40.50.300:FF:000048">
    <property type="entry name" value="Transitional endoplasmic reticulum ATPase"/>
    <property type="match status" value="1"/>
</dbReference>
<dbReference type="Gene3D" id="1.10.8.60">
    <property type="match status" value="1"/>
</dbReference>
<dbReference type="Gene3D" id="2.40.40.20">
    <property type="match status" value="1"/>
</dbReference>
<dbReference type="Gene3D" id="3.10.330.10">
    <property type="match status" value="1"/>
</dbReference>
<dbReference type="Gene3D" id="6.10.20.150">
    <property type="match status" value="1"/>
</dbReference>
<dbReference type="Gene3D" id="3.40.50.300">
    <property type="entry name" value="P-loop containing nucleotide triphosphate hydrolases"/>
    <property type="match status" value="2"/>
</dbReference>
<dbReference type="InterPro" id="IPR003593">
    <property type="entry name" value="AAA+_ATPase"/>
</dbReference>
<dbReference type="InterPro" id="IPR005938">
    <property type="entry name" value="AAA_ATPase_CDC48"/>
</dbReference>
<dbReference type="InterPro" id="IPR050168">
    <property type="entry name" value="AAA_ATPase_domain"/>
</dbReference>
<dbReference type="InterPro" id="IPR041569">
    <property type="entry name" value="AAA_lid_3"/>
</dbReference>
<dbReference type="InterPro" id="IPR009010">
    <property type="entry name" value="Asp_de-COase-like_dom_sf"/>
</dbReference>
<dbReference type="InterPro" id="IPR003959">
    <property type="entry name" value="ATPase_AAA_core"/>
</dbReference>
<dbReference type="InterPro" id="IPR003960">
    <property type="entry name" value="ATPase_AAA_CS"/>
</dbReference>
<dbReference type="InterPro" id="IPR004201">
    <property type="entry name" value="Cdc48_dom2"/>
</dbReference>
<dbReference type="InterPro" id="IPR029067">
    <property type="entry name" value="CDC48_domain_2-like_sf"/>
</dbReference>
<dbReference type="InterPro" id="IPR003338">
    <property type="entry name" value="CDC4_N-term_subdom"/>
</dbReference>
<dbReference type="InterPro" id="IPR027417">
    <property type="entry name" value="P-loop_NTPase"/>
</dbReference>
<dbReference type="InterPro" id="IPR015415">
    <property type="entry name" value="Spast_Vps4_C"/>
</dbReference>
<dbReference type="NCBIfam" id="TIGR01243">
    <property type="entry name" value="CDC48"/>
    <property type="match status" value="1"/>
</dbReference>
<dbReference type="PANTHER" id="PTHR23077">
    <property type="entry name" value="AAA-FAMILY ATPASE"/>
    <property type="match status" value="1"/>
</dbReference>
<dbReference type="PANTHER" id="PTHR23077:SF69">
    <property type="entry name" value="TRANSITIONAL ENDOPLASMIC RETICULUM ATPASE"/>
    <property type="match status" value="1"/>
</dbReference>
<dbReference type="Pfam" id="PF00004">
    <property type="entry name" value="AAA"/>
    <property type="match status" value="2"/>
</dbReference>
<dbReference type="Pfam" id="PF17862">
    <property type="entry name" value="AAA_lid_3"/>
    <property type="match status" value="2"/>
</dbReference>
<dbReference type="Pfam" id="PF02933">
    <property type="entry name" value="CDC48_2"/>
    <property type="match status" value="1"/>
</dbReference>
<dbReference type="Pfam" id="PF02359">
    <property type="entry name" value="CDC48_N"/>
    <property type="match status" value="1"/>
</dbReference>
<dbReference type="Pfam" id="PF09336">
    <property type="entry name" value="Vps4_C"/>
    <property type="match status" value="1"/>
</dbReference>
<dbReference type="SMART" id="SM00382">
    <property type="entry name" value="AAA"/>
    <property type="match status" value="2"/>
</dbReference>
<dbReference type="SMART" id="SM01072">
    <property type="entry name" value="CDC48_2"/>
    <property type="match status" value="1"/>
</dbReference>
<dbReference type="SMART" id="SM01073">
    <property type="entry name" value="CDC48_N"/>
    <property type="match status" value="1"/>
</dbReference>
<dbReference type="SUPFAM" id="SSF50692">
    <property type="entry name" value="ADC-like"/>
    <property type="match status" value="1"/>
</dbReference>
<dbReference type="SUPFAM" id="SSF54585">
    <property type="entry name" value="Cdc48 domain 2-like"/>
    <property type="match status" value="1"/>
</dbReference>
<dbReference type="SUPFAM" id="SSF52540">
    <property type="entry name" value="P-loop containing nucleoside triphosphate hydrolases"/>
    <property type="match status" value="2"/>
</dbReference>
<dbReference type="PROSITE" id="PS00674">
    <property type="entry name" value="AAA"/>
    <property type="match status" value="2"/>
</dbReference>
<proteinExistence type="evidence at protein level"/>
<evidence type="ECO:0000250" key="1">
    <source>
        <dbReference type="UniProtKB" id="P23787"/>
    </source>
</evidence>
<evidence type="ECO:0000250" key="2">
    <source>
        <dbReference type="UniProtKB" id="P46462"/>
    </source>
</evidence>
<evidence type="ECO:0000250" key="3">
    <source>
        <dbReference type="UniProtKB" id="P55072"/>
    </source>
</evidence>
<evidence type="ECO:0000250" key="4">
    <source>
        <dbReference type="UniProtKB" id="Q01853"/>
    </source>
</evidence>
<evidence type="ECO:0000255" key="5"/>
<evidence type="ECO:0000256" key="6">
    <source>
        <dbReference type="SAM" id="MobiDB-lite"/>
    </source>
</evidence>
<evidence type="ECO:0000269" key="7">
    <source>
    </source>
</evidence>
<evidence type="ECO:0000269" key="8">
    <source>
    </source>
</evidence>
<evidence type="ECO:0000269" key="9">
    <source>
    </source>
</evidence>
<evidence type="ECO:0000303" key="10">
    <source>
    </source>
</evidence>
<evidence type="ECO:0000305" key="11"/>
<evidence type="ECO:0000312" key="12">
    <source>
        <dbReference type="EMBL" id="AAH50488.1"/>
    </source>
</evidence>
<evidence type="ECO:0000312" key="13">
    <source>
        <dbReference type="EMBL" id="AAH67384.1"/>
    </source>
</evidence>
<evidence type="ECO:0000312" key="14">
    <source>
        <dbReference type="EMBL" id="AAS92631.1"/>
    </source>
</evidence>
<evidence type="ECO:0000312" key="15">
    <source>
        <dbReference type="EMBL" id="BAC87740.1"/>
    </source>
</evidence>
<evidence type="ECO:0000312" key="16">
    <source>
        <dbReference type="EMBL" id="CAM13143.1"/>
    </source>
</evidence>
<evidence type="ECO:0000312" key="17">
    <source>
        <dbReference type="ZFIN" id="ZDB-GENE-030131-5408"/>
    </source>
</evidence>
<name>TERA_DANRE</name>
<reference evidence="11 15" key="1">
    <citation type="journal article" date="2003" name="FEBS Lett.">
        <title>Cold-inducible expression of the cell division cycle gene CDC48 and its promotion of cell proliferation during cold acclimation in zebrafish cells.</title>
        <authorList>
            <person name="Imamura S."/>
            <person name="Ojima N."/>
            <person name="Yamashita M."/>
        </authorList>
    </citation>
    <scope>NUCLEOTIDE SEQUENCE [MRNA]</scope>
    <scope>FUNCTION</scope>
    <scope>INDUCTION</scope>
    <scope>MUTAGENESIS OF TYR-805</scope>
    <source>
        <tissue evidence="7">Embryo</tissue>
    </source>
</reference>
<reference evidence="11 14" key="2">
    <citation type="journal article" date="2004" name="Proc. Natl. Acad. Sci. U.S.A.">
        <title>Hematopoietic gene expression profile in zebrafish kidney marrow.</title>
        <authorList>
            <person name="Song H.-D."/>
            <person name="Sun X.-J."/>
            <person name="Deng M."/>
            <person name="Zhang G.-W."/>
            <person name="Zhou Y."/>
            <person name="Wu X.-Y."/>
            <person name="Sheng Y."/>
            <person name="Chen Y."/>
            <person name="Ruan Z."/>
            <person name="Jiang C.-L."/>
            <person name="Fan H.-Y."/>
            <person name="Zon L.I."/>
            <person name="Kanki J.P."/>
            <person name="Liu T.X."/>
            <person name="Look A.T."/>
            <person name="Chen Z."/>
        </authorList>
    </citation>
    <scope>NUCLEOTIDE SEQUENCE [LARGE SCALE MRNA]</scope>
    <source>
        <tissue evidence="8">Kidney marrow</tissue>
    </source>
</reference>
<reference key="3">
    <citation type="journal article" date="2013" name="Nature">
        <title>The zebrafish reference genome sequence and its relationship to the human genome.</title>
        <authorList>
            <person name="Howe K."/>
            <person name="Clark M.D."/>
            <person name="Torroja C.F."/>
            <person name="Torrance J."/>
            <person name="Berthelot C."/>
            <person name="Muffato M."/>
            <person name="Collins J.E."/>
            <person name="Humphray S."/>
            <person name="McLaren K."/>
            <person name="Matthews L."/>
            <person name="McLaren S."/>
            <person name="Sealy I."/>
            <person name="Caccamo M."/>
            <person name="Churcher C."/>
            <person name="Scott C."/>
            <person name="Barrett J.C."/>
            <person name="Koch R."/>
            <person name="Rauch G.J."/>
            <person name="White S."/>
            <person name="Chow W."/>
            <person name="Kilian B."/>
            <person name="Quintais L.T."/>
            <person name="Guerra-Assuncao J.A."/>
            <person name="Zhou Y."/>
            <person name="Gu Y."/>
            <person name="Yen J."/>
            <person name="Vogel J.H."/>
            <person name="Eyre T."/>
            <person name="Redmond S."/>
            <person name="Banerjee R."/>
            <person name="Chi J."/>
            <person name="Fu B."/>
            <person name="Langley E."/>
            <person name="Maguire S.F."/>
            <person name="Laird G.K."/>
            <person name="Lloyd D."/>
            <person name="Kenyon E."/>
            <person name="Donaldson S."/>
            <person name="Sehra H."/>
            <person name="Almeida-King J."/>
            <person name="Loveland J."/>
            <person name="Trevanion S."/>
            <person name="Jones M."/>
            <person name="Quail M."/>
            <person name="Willey D."/>
            <person name="Hunt A."/>
            <person name="Burton J."/>
            <person name="Sims S."/>
            <person name="McLay K."/>
            <person name="Plumb B."/>
            <person name="Davis J."/>
            <person name="Clee C."/>
            <person name="Oliver K."/>
            <person name="Clark R."/>
            <person name="Riddle C."/>
            <person name="Elliot D."/>
            <person name="Threadgold G."/>
            <person name="Harden G."/>
            <person name="Ware D."/>
            <person name="Begum S."/>
            <person name="Mortimore B."/>
            <person name="Kerry G."/>
            <person name="Heath P."/>
            <person name="Phillimore B."/>
            <person name="Tracey A."/>
            <person name="Corby N."/>
            <person name="Dunn M."/>
            <person name="Johnson C."/>
            <person name="Wood J."/>
            <person name="Clark S."/>
            <person name="Pelan S."/>
            <person name="Griffiths G."/>
            <person name="Smith M."/>
            <person name="Glithero R."/>
            <person name="Howden P."/>
            <person name="Barker N."/>
            <person name="Lloyd C."/>
            <person name="Stevens C."/>
            <person name="Harley J."/>
            <person name="Holt K."/>
            <person name="Panagiotidis G."/>
            <person name="Lovell J."/>
            <person name="Beasley H."/>
            <person name="Henderson C."/>
            <person name="Gordon D."/>
            <person name="Auger K."/>
            <person name="Wright D."/>
            <person name="Collins J."/>
            <person name="Raisen C."/>
            <person name="Dyer L."/>
            <person name="Leung K."/>
            <person name="Robertson L."/>
            <person name="Ambridge K."/>
            <person name="Leongamornlert D."/>
            <person name="McGuire S."/>
            <person name="Gilderthorp R."/>
            <person name="Griffiths C."/>
            <person name="Manthravadi D."/>
            <person name="Nichol S."/>
            <person name="Barker G."/>
            <person name="Whitehead S."/>
            <person name="Kay M."/>
            <person name="Brown J."/>
            <person name="Murnane C."/>
            <person name="Gray E."/>
            <person name="Humphries M."/>
            <person name="Sycamore N."/>
            <person name="Barker D."/>
            <person name="Saunders D."/>
            <person name="Wallis J."/>
            <person name="Babbage A."/>
            <person name="Hammond S."/>
            <person name="Mashreghi-Mohammadi M."/>
            <person name="Barr L."/>
            <person name="Martin S."/>
            <person name="Wray P."/>
            <person name="Ellington A."/>
            <person name="Matthews N."/>
            <person name="Ellwood M."/>
            <person name="Woodmansey R."/>
            <person name="Clark G."/>
            <person name="Cooper J."/>
            <person name="Tromans A."/>
            <person name="Grafham D."/>
            <person name="Skuce C."/>
            <person name="Pandian R."/>
            <person name="Andrews R."/>
            <person name="Harrison E."/>
            <person name="Kimberley A."/>
            <person name="Garnett J."/>
            <person name="Fosker N."/>
            <person name="Hall R."/>
            <person name="Garner P."/>
            <person name="Kelly D."/>
            <person name="Bird C."/>
            <person name="Palmer S."/>
            <person name="Gehring I."/>
            <person name="Berger A."/>
            <person name="Dooley C.M."/>
            <person name="Ersan-Urun Z."/>
            <person name="Eser C."/>
            <person name="Geiger H."/>
            <person name="Geisler M."/>
            <person name="Karotki L."/>
            <person name="Kirn A."/>
            <person name="Konantz J."/>
            <person name="Konantz M."/>
            <person name="Oberlander M."/>
            <person name="Rudolph-Geiger S."/>
            <person name="Teucke M."/>
            <person name="Lanz C."/>
            <person name="Raddatz G."/>
            <person name="Osoegawa K."/>
            <person name="Zhu B."/>
            <person name="Rapp A."/>
            <person name="Widaa S."/>
            <person name="Langford C."/>
            <person name="Yang F."/>
            <person name="Schuster S.C."/>
            <person name="Carter N.P."/>
            <person name="Harrow J."/>
            <person name="Ning Z."/>
            <person name="Herrero J."/>
            <person name="Searle S.M."/>
            <person name="Enright A."/>
            <person name="Geisler R."/>
            <person name="Plasterk R.H."/>
            <person name="Lee C."/>
            <person name="Westerfield M."/>
            <person name="de Jong P.J."/>
            <person name="Zon L.I."/>
            <person name="Postlethwait J.H."/>
            <person name="Nusslein-Volhard C."/>
            <person name="Hubbard T.J."/>
            <person name="Roest Crollius H."/>
            <person name="Rogers J."/>
            <person name="Stemple D.L."/>
        </authorList>
    </citation>
    <scope>NUCLEOTIDE SEQUENCE [LARGE SCALE GENOMIC DNA]</scope>
    <source>
        <strain>Tuebingen</strain>
    </source>
</reference>
<reference evidence="16" key="4">
    <citation type="submission" date="2004-03" db="EMBL/GenBank/DDBJ databases">
        <authorList>
            <consortium name="NIH - Zebrafish Gene Collection (ZGC) project"/>
        </authorList>
    </citation>
    <scope>NUCLEOTIDE SEQUENCE [LARGE SCALE MRNA]</scope>
    <source>
        <strain evidence="12">AB</strain>
        <tissue evidence="13">Kidney</tissue>
    </source>
</reference>
<reference evidence="11" key="5">
    <citation type="journal article" date="2008" name="J. Proteome Res.">
        <title>Online automated in vivo zebrafish phosphoproteomics: from large-scale analysis down to a single embryo.</title>
        <authorList>
            <person name="Lemeer S."/>
            <person name="Pinkse M.W.H."/>
            <person name="Mohammed S."/>
            <person name="van Breukelen B."/>
            <person name="den Hertog J."/>
            <person name="Slijper M."/>
            <person name="Heck A.J.R."/>
        </authorList>
    </citation>
    <scope>PHOSPHORYLATION [LARGE SCALE ANALYSIS] AT SER-3</scope>
    <scope>IDENTIFICATION BY MASS SPECTROMETRY</scope>
    <source>
        <tissue evidence="9">Embryo</tissue>
    </source>
</reference>
<protein>
    <recommendedName>
        <fullName evidence="1">Transitional endoplasmic reticulum ATPase</fullName>
        <shortName evidence="1">TER ATPase</shortName>
        <ecNumber evidence="1">3.6.4.6</ecNumber>
    </recommendedName>
    <alternativeName>
        <fullName evidence="10 15">Protein CDC48</fullName>
    </alternativeName>
    <alternativeName>
        <fullName evidence="10 12">Valosin-containing protein</fullName>
        <shortName evidence="1 10">VCP</shortName>
    </alternativeName>
</protein>
<gene>
    <name evidence="12 17" type="primary">vcp</name>
    <name type="synonym">cdc48</name>
    <name type="ORF">si:ch211-113n10.2</name>
</gene>
<feature type="chain" id="PRO_0000382233" description="Transitional endoplasmic reticulum ATPase">
    <location>
        <begin position="1"/>
        <end position="806"/>
    </location>
</feature>
<feature type="region of interest" description="Disordered" evidence="6">
    <location>
        <begin position="708"/>
        <end position="727"/>
    </location>
</feature>
<feature type="region of interest" description="Disordered" evidence="6">
    <location>
        <begin position="768"/>
        <end position="806"/>
    </location>
</feature>
<feature type="compositionally biased region" description="Low complexity" evidence="6">
    <location>
        <begin position="768"/>
        <end position="778"/>
    </location>
</feature>
<feature type="compositionally biased region" description="Gly residues" evidence="6">
    <location>
        <begin position="779"/>
        <end position="794"/>
    </location>
</feature>
<feature type="binding site" evidence="3">
    <location>
        <begin position="247"/>
        <end position="253"/>
    </location>
    <ligand>
        <name>ATP</name>
        <dbReference type="ChEBI" id="CHEBI:30616"/>
        <label>1</label>
    </ligand>
</feature>
<feature type="binding site" evidence="3">
    <location>
        <position position="348"/>
    </location>
    <ligand>
        <name>ATP</name>
        <dbReference type="ChEBI" id="CHEBI:30616"/>
        <label>1</label>
    </ligand>
</feature>
<feature type="binding site" evidence="3">
    <location>
        <position position="384"/>
    </location>
    <ligand>
        <name>ATP</name>
        <dbReference type="ChEBI" id="CHEBI:30616"/>
        <label>1</label>
    </ligand>
</feature>
<feature type="binding site" evidence="4">
    <location>
        <begin position="521"/>
        <end position="526"/>
    </location>
    <ligand>
        <name>ATP</name>
        <dbReference type="ChEBI" id="CHEBI:30616"/>
        <label>2</label>
    </ligand>
</feature>
<feature type="modified residue" description="Phosphoserine" evidence="9">
    <location>
        <position position="3"/>
    </location>
</feature>
<feature type="mutagenesis site" description="Inhibits cell-proliferation and enhances apoptosis at low temperatures." evidence="7">
    <original>Y</original>
    <variation>A</variation>
    <location>
        <position position="805"/>
    </location>
</feature>
<feature type="sequence conflict" description="In Ref. 1; BAC87740." evidence="11" ref="1">
    <original>QLI</original>
    <variation>HIM</variation>
    <location>
        <begin position="641"/>
        <end position="643"/>
    </location>
</feature>
<feature type="sequence conflict" description="In Ref. 1; BAC87740." evidence="11" ref="1">
    <original>R</original>
    <variation>L</variation>
    <location>
        <position position="709"/>
    </location>
</feature>